<gene>
    <name evidence="1" type="primary">rimM</name>
    <name type="ordered locus">HAPS_1942</name>
</gene>
<feature type="chain" id="PRO_1000116569" description="Ribosome maturation factor RimM">
    <location>
        <begin position="1"/>
        <end position="175"/>
    </location>
</feature>
<feature type="domain" description="PRC barrel" evidence="1">
    <location>
        <begin position="95"/>
        <end position="175"/>
    </location>
</feature>
<organism>
    <name type="scientific">Glaesserella parasuis serovar 5 (strain SH0165)</name>
    <name type="common">Haemophilus parasuis</name>
    <dbReference type="NCBI Taxonomy" id="557723"/>
    <lineage>
        <taxon>Bacteria</taxon>
        <taxon>Pseudomonadati</taxon>
        <taxon>Pseudomonadota</taxon>
        <taxon>Gammaproteobacteria</taxon>
        <taxon>Pasteurellales</taxon>
        <taxon>Pasteurellaceae</taxon>
        <taxon>Glaesserella</taxon>
    </lineage>
</organism>
<protein>
    <recommendedName>
        <fullName evidence="1">Ribosome maturation factor RimM</fullName>
    </recommendedName>
</protein>
<dbReference type="EMBL" id="CP001321">
    <property type="protein sequence ID" value="ACL33426.1"/>
    <property type="molecule type" value="Genomic_DNA"/>
</dbReference>
<dbReference type="RefSeq" id="WP_015939992.1">
    <property type="nucleotide sequence ID" value="NC_011852.1"/>
</dbReference>
<dbReference type="SMR" id="B8F7X4"/>
<dbReference type="STRING" id="557723.HAPS_1942"/>
<dbReference type="KEGG" id="hap:HAPS_1942"/>
<dbReference type="HOGENOM" id="CLU_077636_1_0_6"/>
<dbReference type="Proteomes" id="UP000006743">
    <property type="component" value="Chromosome"/>
</dbReference>
<dbReference type="GO" id="GO:0005737">
    <property type="term" value="C:cytoplasm"/>
    <property type="evidence" value="ECO:0007669"/>
    <property type="project" value="UniProtKB-SubCell"/>
</dbReference>
<dbReference type="GO" id="GO:0005840">
    <property type="term" value="C:ribosome"/>
    <property type="evidence" value="ECO:0007669"/>
    <property type="project" value="InterPro"/>
</dbReference>
<dbReference type="GO" id="GO:0043022">
    <property type="term" value="F:ribosome binding"/>
    <property type="evidence" value="ECO:0007669"/>
    <property type="project" value="InterPro"/>
</dbReference>
<dbReference type="GO" id="GO:0042274">
    <property type="term" value="P:ribosomal small subunit biogenesis"/>
    <property type="evidence" value="ECO:0007669"/>
    <property type="project" value="UniProtKB-UniRule"/>
</dbReference>
<dbReference type="GO" id="GO:0006364">
    <property type="term" value="P:rRNA processing"/>
    <property type="evidence" value="ECO:0007669"/>
    <property type="project" value="UniProtKB-UniRule"/>
</dbReference>
<dbReference type="Gene3D" id="2.30.30.240">
    <property type="entry name" value="PRC-barrel domain"/>
    <property type="match status" value="1"/>
</dbReference>
<dbReference type="Gene3D" id="2.40.30.60">
    <property type="entry name" value="RimM"/>
    <property type="match status" value="1"/>
</dbReference>
<dbReference type="HAMAP" id="MF_00014">
    <property type="entry name" value="Ribosome_mat_RimM"/>
    <property type="match status" value="1"/>
</dbReference>
<dbReference type="InterPro" id="IPR011033">
    <property type="entry name" value="PRC_barrel-like_sf"/>
</dbReference>
<dbReference type="InterPro" id="IPR056792">
    <property type="entry name" value="PRC_RimM"/>
</dbReference>
<dbReference type="InterPro" id="IPR011961">
    <property type="entry name" value="RimM"/>
</dbReference>
<dbReference type="InterPro" id="IPR002676">
    <property type="entry name" value="RimM_N"/>
</dbReference>
<dbReference type="InterPro" id="IPR036976">
    <property type="entry name" value="RimM_N_sf"/>
</dbReference>
<dbReference type="InterPro" id="IPR009000">
    <property type="entry name" value="Transl_B-barrel_sf"/>
</dbReference>
<dbReference type="NCBIfam" id="TIGR02273">
    <property type="entry name" value="16S_RimM"/>
    <property type="match status" value="1"/>
</dbReference>
<dbReference type="PANTHER" id="PTHR33692">
    <property type="entry name" value="RIBOSOME MATURATION FACTOR RIMM"/>
    <property type="match status" value="1"/>
</dbReference>
<dbReference type="PANTHER" id="PTHR33692:SF1">
    <property type="entry name" value="RIBOSOME MATURATION FACTOR RIMM"/>
    <property type="match status" value="1"/>
</dbReference>
<dbReference type="Pfam" id="PF24986">
    <property type="entry name" value="PRC_RimM"/>
    <property type="match status" value="1"/>
</dbReference>
<dbReference type="Pfam" id="PF01782">
    <property type="entry name" value="RimM"/>
    <property type="match status" value="1"/>
</dbReference>
<dbReference type="SUPFAM" id="SSF50346">
    <property type="entry name" value="PRC-barrel domain"/>
    <property type="match status" value="1"/>
</dbReference>
<dbReference type="SUPFAM" id="SSF50447">
    <property type="entry name" value="Translation proteins"/>
    <property type="match status" value="1"/>
</dbReference>
<name>RIMM_GLAP5</name>
<comment type="function">
    <text evidence="1">An accessory protein needed during the final step in the assembly of 30S ribosomal subunit, possibly for assembly of the head region. Essential for efficient processing of 16S rRNA. May be needed both before and after RbfA during the maturation of 16S rRNA. It has affinity for free ribosomal 30S subunits but not for 70S ribosomes.</text>
</comment>
<comment type="subunit">
    <text evidence="1">Binds ribosomal protein uS19.</text>
</comment>
<comment type="subcellular location">
    <subcellularLocation>
        <location evidence="1">Cytoplasm</location>
    </subcellularLocation>
</comment>
<comment type="domain">
    <text evidence="1">The PRC barrel domain binds ribosomal protein uS19.</text>
</comment>
<comment type="similarity">
    <text evidence="1">Belongs to the RimM family.</text>
</comment>
<sequence length="175" mass="20071">MSEQKIEVVGKLGSTYGIRGWLRLYSSTEYPESIFDYQPWFLKIKGQWQQVELESWRYHNNDLIVKLKGTEDRETAQLLTNAEIGVDLAVFPELEEGDYYWHDLIGCQVVNLEGYAMGTVTEMMETGSNDVLVVKAGSKDAFGKQERLIPFLYEQVVKRVDLATKTITVDWDAGF</sequence>
<proteinExistence type="inferred from homology"/>
<keyword id="KW-0143">Chaperone</keyword>
<keyword id="KW-0963">Cytoplasm</keyword>
<keyword id="KW-1185">Reference proteome</keyword>
<keyword id="KW-0690">Ribosome biogenesis</keyword>
<keyword id="KW-0698">rRNA processing</keyword>
<evidence type="ECO:0000255" key="1">
    <source>
        <dbReference type="HAMAP-Rule" id="MF_00014"/>
    </source>
</evidence>
<reference key="1">
    <citation type="journal article" date="2009" name="J. Bacteriol.">
        <title>Complete genome sequence of Haemophilus parasuis SH0165.</title>
        <authorList>
            <person name="Yue M."/>
            <person name="Yang F."/>
            <person name="Yang J."/>
            <person name="Bei W."/>
            <person name="Cai X."/>
            <person name="Chen L."/>
            <person name="Dong J."/>
            <person name="Zhou R."/>
            <person name="Jin M."/>
            <person name="Jin Q."/>
            <person name="Chen H."/>
        </authorList>
    </citation>
    <scope>NUCLEOTIDE SEQUENCE [LARGE SCALE GENOMIC DNA]</scope>
    <source>
        <strain>SH0165</strain>
    </source>
</reference>
<accession>B8F7X4</accession>